<organism>
    <name type="scientific">Homo sapiens</name>
    <name type="common">Human</name>
    <dbReference type="NCBI Taxonomy" id="9606"/>
    <lineage>
        <taxon>Eukaryota</taxon>
        <taxon>Metazoa</taxon>
        <taxon>Chordata</taxon>
        <taxon>Craniata</taxon>
        <taxon>Vertebrata</taxon>
        <taxon>Euteleostomi</taxon>
        <taxon>Mammalia</taxon>
        <taxon>Eutheria</taxon>
        <taxon>Euarchontoglires</taxon>
        <taxon>Primates</taxon>
        <taxon>Haplorrhini</taxon>
        <taxon>Catarrhini</taxon>
        <taxon>Hominidae</taxon>
        <taxon>Homo</taxon>
    </lineage>
</organism>
<proteinExistence type="inferred from homology"/>
<accession>P63136</accession>
<protein>
    <recommendedName>
        <fullName>Endogenous retrovirus group K member 25 Pol protein</fullName>
    </recommendedName>
    <alternativeName>
        <fullName>HERV-K_11q22.1 provirus ancestral Pol protein</fullName>
    </alternativeName>
    <domain>
        <recommendedName>
            <fullName>Reverse transcriptase</fullName>
            <shortName>RT</shortName>
            <ecNumber>2.7.7.49</ecNumber>
        </recommendedName>
    </domain>
    <domain>
        <recommendedName>
            <fullName>Ribonuclease H</fullName>
            <shortName>RNase H</shortName>
            <ecNumber>3.1.26.4</ecNumber>
        </recommendedName>
    </domain>
    <domain>
        <recommendedName>
            <fullName>Integrase</fullName>
            <shortName>IN</shortName>
        </recommendedName>
    </domain>
</protein>
<dbReference type="EC" id="2.7.7.49"/>
<dbReference type="EC" id="3.1.26.4"/>
<dbReference type="EMBL" id="AP000776">
    <property type="status" value="NOT_ANNOTATED_CDS"/>
    <property type="molecule type" value="Genomic_DNA"/>
</dbReference>
<dbReference type="SMR" id="P63136"/>
<dbReference type="FunCoup" id="P63136">
    <property type="interactions" value="8"/>
</dbReference>
<dbReference type="GlyGen" id="P63136">
    <property type="glycosylation" value="2 sites"/>
</dbReference>
<dbReference type="BioMuta" id="HGNC:39039"/>
<dbReference type="DMDM" id="52000774"/>
<dbReference type="MassIVE" id="P63136"/>
<dbReference type="PeptideAtlas" id="P63136"/>
<dbReference type="GeneCards" id="ERVK-25"/>
<dbReference type="HGNC" id="HGNC:39039">
    <property type="gene designation" value="ERVK-25"/>
</dbReference>
<dbReference type="neXtProt" id="NX_P63136"/>
<dbReference type="InParanoid" id="P63136"/>
<dbReference type="PAN-GO" id="P63136">
    <property type="GO annotations" value="1 GO annotation based on evolutionary models"/>
</dbReference>
<dbReference type="PhylomeDB" id="P63136"/>
<dbReference type="Pharos" id="P63136">
    <property type="development level" value="Tdark"/>
</dbReference>
<dbReference type="Proteomes" id="UP000005640">
    <property type="component" value="Unplaced"/>
</dbReference>
<dbReference type="RNAct" id="P63136">
    <property type="molecule type" value="protein"/>
</dbReference>
<dbReference type="GO" id="GO:0003677">
    <property type="term" value="F:DNA binding"/>
    <property type="evidence" value="ECO:0007669"/>
    <property type="project" value="UniProtKB-KW"/>
</dbReference>
<dbReference type="GO" id="GO:0035613">
    <property type="term" value="F:RNA stem-loop binding"/>
    <property type="evidence" value="ECO:0000318"/>
    <property type="project" value="GO_Central"/>
</dbReference>
<dbReference type="GO" id="GO:0003964">
    <property type="term" value="F:RNA-directed DNA polymerase activity"/>
    <property type="evidence" value="ECO:0007669"/>
    <property type="project" value="UniProtKB-KW"/>
</dbReference>
<dbReference type="GO" id="GO:0004523">
    <property type="term" value="F:RNA-DNA hybrid ribonuclease activity"/>
    <property type="evidence" value="ECO:0007669"/>
    <property type="project" value="UniProtKB-EC"/>
</dbReference>
<dbReference type="GO" id="GO:0008270">
    <property type="term" value="F:zinc ion binding"/>
    <property type="evidence" value="ECO:0007669"/>
    <property type="project" value="UniProtKB-KW"/>
</dbReference>
<dbReference type="GO" id="GO:0015074">
    <property type="term" value="P:DNA integration"/>
    <property type="evidence" value="ECO:0007669"/>
    <property type="project" value="UniProtKB-KW"/>
</dbReference>
<dbReference type="GO" id="GO:0006310">
    <property type="term" value="P:DNA recombination"/>
    <property type="evidence" value="ECO:0007669"/>
    <property type="project" value="UniProtKB-KW"/>
</dbReference>
<dbReference type="GO" id="GO:0000731">
    <property type="term" value="P:DNA synthesis involved in DNA repair"/>
    <property type="evidence" value="ECO:0007669"/>
    <property type="project" value="UniProtKB-ARBA"/>
</dbReference>
<dbReference type="GO" id="GO:0006261">
    <property type="term" value="P:DNA-templated DNA replication"/>
    <property type="evidence" value="ECO:0007669"/>
    <property type="project" value="UniProtKB-ARBA"/>
</dbReference>
<dbReference type="CDD" id="cd09273">
    <property type="entry name" value="RNase_HI_RT_Bel"/>
    <property type="match status" value="1"/>
</dbReference>
<dbReference type="CDD" id="cd01645">
    <property type="entry name" value="RT_Rtv"/>
    <property type="match status" value="1"/>
</dbReference>
<dbReference type="FunFam" id="3.30.70.270:FF:000085">
    <property type="entry name" value="Endogenous retrovirus group K member 10 Pol protein"/>
    <property type="match status" value="1"/>
</dbReference>
<dbReference type="FunFam" id="3.30.420.10:FF:000145">
    <property type="entry name" value="Endogenous retrovirus group K member 18 Pol protein"/>
    <property type="match status" value="1"/>
</dbReference>
<dbReference type="FunFam" id="3.30.420.10:FF:000146">
    <property type="entry name" value="Endogenous retrovirus group K member 6 Pol protein"/>
    <property type="match status" value="1"/>
</dbReference>
<dbReference type="Gene3D" id="1.10.10.200">
    <property type="match status" value="1"/>
</dbReference>
<dbReference type="Gene3D" id="3.30.70.270">
    <property type="match status" value="2"/>
</dbReference>
<dbReference type="Gene3D" id="3.10.10.10">
    <property type="entry name" value="HIV Type 1 Reverse Transcriptase, subunit A, domain 1"/>
    <property type="match status" value="1"/>
</dbReference>
<dbReference type="Gene3D" id="2.30.30.10">
    <property type="entry name" value="Integrase, C-terminal domain superfamily, retroviral"/>
    <property type="match status" value="1"/>
</dbReference>
<dbReference type="Gene3D" id="3.30.420.10">
    <property type="entry name" value="Ribonuclease H-like superfamily/Ribonuclease H"/>
    <property type="match status" value="2"/>
</dbReference>
<dbReference type="InterPro" id="IPR043502">
    <property type="entry name" value="DNA/RNA_pol_sf"/>
</dbReference>
<dbReference type="InterPro" id="IPR017856">
    <property type="entry name" value="Integrase-like_N"/>
</dbReference>
<dbReference type="InterPro" id="IPR036862">
    <property type="entry name" value="Integrase_C_dom_sf_retrovir"/>
</dbReference>
<dbReference type="InterPro" id="IPR001037">
    <property type="entry name" value="Integrase_C_retrovir"/>
</dbReference>
<dbReference type="InterPro" id="IPR001584">
    <property type="entry name" value="Integrase_cat-core"/>
</dbReference>
<dbReference type="InterPro" id="IPR003308">
    <property type="entry name" value="Integrase_Zn-bd_dom_N"/>
</dbReference>
<dbReference type="InterPro" id="IPR043128">
    <property type="entry name" value="Rev_trsase/Diguanyl_cyclase"/>
</dbReference>
<dbReference type="InterPro" id="IPR012337">
    <property type="entry name" value="RNaseH-like_sf"/>
</dbReference>
<dbReference type="InterPro" id="IPR002156">
    <property type="entry name" value="RNaseH_domain"/>
</dbReference>
<dbReference type="InterPro" id="IPR036397">
    <property type="entry name" value="RNaseH_sf"/>
</dbReference>
<dbReference type="InterPro" id="IPR000477">
    <property type="entry name" value="RT_dom"/>
</dbReference>
<dbReference type="InterPro" id="IPR010661">
    <property type="entry name" value="RVT_thumb"/>
</dbReference>
<dbReference type="PANTHER" id="PTHR41694:SF4">
    <property type="entry name" value="ENDOGENOUS RETROVIRUS GROUP K MEMBER 10 POL PROTEIN-RELATED"/>
    <property type="match status" value="1"/>
</dbReference>
<dbReference type="PANTHER" id="PTHR41694">
    <property type="entry name" value="ENDOGENOUS RETROVIRUS GROUP K MEMBER POL PROTEIN"/>
    <property type="match status" value="1"/>
</dbReference>
<dbReference type="Pfam" id="PF00552">
    <property type="entry name" value="IN_DBD_C"/>
    <property type="match status" value="1"/>
</dbReference>
<dbReference type="Pfam" id="PF02022">
    <property type="entry name" value="Integrase_Zn"/>
    <property type="match status" value="1"/>
</dbReference>
<dbReference type="Pfam" id="PF00075">
    <property type="entry name" value="RNase_H"/>
    <property type="match status" value="1"/>
</dbReference>
<dbReference type="Pfam" id="PF00665">
    <property type="entry name" value="rve"/>
    <property type="match status" value="1"/>
</dbReference>
<dbReference type="Pfam" id="PF00078">
    <property type="entry name" value="RVT_1"/>
    <property type="match status" value="1"/>
</dbReference>
<dbReference type="Pfam" id="PF06817">
    <property type="entry name" value="RVT_thumb"/>
    <property type="match status" value="1"/>
</dbReference>
<dbReference type="SUPFAM" id="SSF50122">
    <property type="entry name" value="DNA-binding domain of retroviral integrase"/>
    <property type="match status" value="1"/>
</dbReference>
<dbReference type="SUPFAM" id="SSF56672">
    <property type="entry name" value="DNA/RNA polymerases"/>
    <property type="match status" value="1"/>
</dbReference>
<dbReference type="SUPFAM" id="SSF46919">
    <property type="entry name" value="N-terminal Zn binding domain of HIV integrase"/>
    <property type="match status" value="1"/>
</dbReference>
<dbReference type="SUPFAM" id="SSF53098">
    <property type="entry name" value="Ribonuclease H-like"/>
    <property type="match status" value="2"/>
</dbReference>
<dbReference type="PROSITE" id="PS50994">
    <property type="entry name" value="INTEGRASE"/>
    <property type="match status" value="1"/>
</dbReference>
<dbReference type="PROSITE" id="PS51027">
    <property type="entry name" value="INTEGRASE_DBD"/>
    <property type="match status" value="1"/>
</dbReference>
<dbReference type="PROSITE" id="PS50879">
    <property type="entry name" value="RNASE_H_1"/>
    <property type="match status" value="1"/>
</dbReference>
<dbReference type="PROSITE" id="PS50878">
    <property type="entry name" value="RT_POL"/>
    <property type="match status" value="1"/>
</dbReference>
<dbReference type="PROSITE" id="PS50876">
    <property type="entry name" value="ZF_INTEGRASE"/>
    <property type="match status" value="1"/>
</dbReference>
<keyword id="KW-0229">DNA integration</keyword>
<keyword id="KW-0233">DNA recombination</keyword>
<keyword id="KW-0238">DNA-binding</keyword>
<keyword id="KW-0255">Endonuclease</keyword>
<keyword id="KW-0895">ERV</keyword>
<keyword id="KW-0378">Hydrolase</keyword>
<keyword id="KW-0479">Metal-binding</keyword>
<keyword id="KW-0511">Multifunctional enzyme</keyword>
<keyword id="KW-0540">Nuclease</keyword>
<keyword id="KW-0548">Nucleotidyltransferase</keyword>
<keyword id="KW-1185">Reference proteome</keyword>
<keyword id="KW-0695">RNA-directed DNA polymerase</keyword>
<keyword id="KW-0808">Transferase</keyword>
<keyword id="KW-0814">Transposable element</keyword>
<keyword id="KW-0862">Zinc</keyword>
<keyword id="KW-0863">Zinc-finger</keyword>
<feature type="chain" id="PRO_0000186772" description="Endogenous retrovirus group K member 25 Pol protein">
    <location>
        <begin position="1"/>
        <end position="954"/>
    </location>
</feature>
<feature type="domain" description="Reverse transcriptase" evidence="2">
    <location>
        <begin position="57"/>
        <end position="245"/>
    </location>
</feature>
<feature type="domain" description="RNase H type-1" evidence="3">
    <location>
        <begin position="460"/>
        <end position="588"/>
    </location>
</feature>
<feature type="domain" description="Integrase catalytic" evidence="5">
    <location>
        <begin position="640"/>
        <end position="801"/>
    </location>
</feature>
<feature type="zinc finger region" description="Integrase-type" evidence="4">
    <location>
        <begin position="585"/>
        <end position="626"/>
    </location>
</feature>
<feature type="DNA-binding region" description="Integrase-type" evidence="6">
    <location>
        <begin position="809"/>
        <end position="857"/>
    </location>
</feature>
<feature type="region of interest" description="Disordered" evidence="7">
    <location>
        <begin position="862"/>
        <end position="888"/>
    </location>
</feature>
<feature type="short sequence motif" description="LPQG">
    <location>
        <begin position="161"/>
        <end position="164"/>
    </location>
</feature>
<feature type="short sequence motif" description="YXDD">
    <location>
        <begin position="195"/>
        <end position="198"/>
    </location>
</feature>
<feature type="compositionally biased region" description="Polar residues" evidence="7">
    <location>
        <begin position="867"/>
        <end position="879"/>
    </location>
</feature>
<feature type="binding site" evidence="3">
    <location>
        <position position="469"/>
    </location>
    <ligand>
        <name>Mg(2+)</name>
        <dbReference type="ChEBI" id="CHEBI:18420"/>
        <label>1</label>
    </ligand>
</feature>
<feature type="binding site" evidence="3">
    <location>
        <position position="469"/>
    </location>
    <ligand>
        <name>Mg(2+)</name>
        <dbReference type="ChEBI" id="CHEBI:18420"/>
        <label>2</label>
    </ligand>
</feature>
<feature type="binding site" evidence="3">
    <location>
        <position position="497"/>
    </location>
    <ligand>
        <name>Mg(2+)</name>
        <dbReference type="ChEBI" id="CHEBI:18420"/>
        <label>1</label>
    </ligand>
</feature>
<feature type="binding site" evidence="3">
    <location>
        <position position="515"/>
    </location>
    <ligand>
        <name>Mg(2+)</name>
        <dbReference type="ChEBI" id="CHEBI:18420"/>
        <label>1</label>
    </ligand>
</feature>
<feature type="binding site" evidence="3">
    <location>
        <position position="580"/>
    </location>
    <ligand>
        <name>Mg(2+)</name>
        <dbReference type="ChEBI" id="CHEBI:18420"/>
        <label>2</label>
    </ligand>
</feature>
<feature type="binding site" evidence="4">
    <location>
        <position position="594"/>
    </location>
    <ligand>
        <name>Zn(2+)</name>
        <dbReference type="ChEBI" id="CHEBI:29105"/>
    </ligand>
</feature>
<feature type="binding site" evidence="4">
    <location>
        <position position="598"/>
    </location>
    <ligand>
        <name>Zn(2+)</name>
        <dbReference type="ChEBI" id="CHEBI:29105"/>
    </ligand>
</feature>
<feature type="binding site" evidence="4">
    <location>
        <position position="622"/>
    </location>
    <ligand>
        <name>Zn(2+)</name>
        <dbReference type="ChEBI" id="CHEBI:29105"/>
    </ligand>
</feature>
<feature type="binding site" evidence="4">
    <location>
        <position position="625"/>
    </location>
    <ligand>
        <name>Zn(2+)</name>
        <dbReference type="ChEBI" id="CHEBI:29105"/>
    </ligand>
</feature>
<evidence type="ECO:0000250" key="1"/>
<evidence type="ECO:0000255" key="2">
    <source>
        <dbReference type="PROSITE-ProRule" id="PRU00405"/>
    </source>
</evidence>
<evidence type="ECO:0000255" key="3">
    <source>
        <dbReference type="PROSITE-ProRule" id="PRU00408"/>
    </source>
</evidence>
<evidence type="ECO:0000255" key="4">
    <source>
        <dbReference type="PROSITE-ProRule" id="PRU00450"/>
    </source>
</evidence>
<evidence type="ECO:0000255" key="5">
    <source>
        <dbReference type="PROSITE-ProRule" id="PRU00457"/>
    </source>
</evidence>
<evidence type="ECO:0000255" key="6">
    <source>
        <dbReference type="PROSITE-ProRule" id="PRU00506"/>
    </source>
</evidence>
<evidence type="ECO:0000256" key="7">
    <source>
        <dbReference type="SAM" id="MobiDB-lite"/>
    </source>
</evidence>
<evidence type="ECO:0000305" key="8"/>
<sequence>NKSKKRRNRVSFLGAATVEPPKPIPLTWKTEKPVWVNQWPLPKQKLEALHLLANEQLEKGHIEPSFSPWNSPVFVIQKKSGKWRMLTDLRAVNAVIQPMGPLQPGLPSPAMIPKDWPLIIIDLKDCFFTIPLAEQDCEKFAFTIPAINNKEPATRFQWKVLPQGMLNSPTICQTFVGRALQPVREKFSDCYIIHYIDDILCAAETKDKLIDCYTFLQAEVANAGLAIASDKIQTSTPFHYLGMQIENRKIKPQKIEIRKDTLKALNDFQKLLGDINWIRPTLGIPTYAMSNLFSILRGDSDLNSKRMLTPEATKEIKLVEEKIQSAQINRIDPLAPLQLLIFATAHSPTGIIIQNTDLVEWSFLPHSTVKTFTLYLDQIATLIGQTRLRIIKLCGNDPDKIVVPLTKEQVRQAFINSGAWQIGLANFVGIIDNHYPKTKIFQFLKLTTWILPKITRREPLENALTVFTDGSSNGKAAYTGPKERVIKTPYQSAQRAELVAVITVLQDFDINIISDSAYVVQATRDVETALIKYSMDDQLNQLFNLLQQTVRKRNFPFYITHIRAHTNLPGPLTKANKQADLLVSSALIKAQELHALTHVNAAGLKNKFDVTWKLAKDIVQHCTQCQVLHLPTQEAGVNPRGLCPNALWQMDVTHVPSFGRLSYVHVTVDTYSHFIWATCHTGESTSHVKKHLLSCFAVMGVPEKIKTDNGPGYCSKAFQKFLSQWKISHTTGIPYNSQGQAIVERTNRTLKTQLVKQKEGGDSKECTTPQMQLNLALYTLNFLNIYRNQTTTSAEQHLTGKKNSPHEGKLIWWKDNKNKTWEIGKVITWGRGFACVSPGENQLPVWIPTRHLKFYNEPIRDAKKSTSAETETPQSSTVDSQDEQNGDVRRTDEVAIHQEGRAANLGTTKEADAVSYKISREHKGDTNPREYAACSLDDCINGGKSPYACRSSCS</sequence>
<comment type="function">
    <text evidence="1">Early post-infection, the reverse transcriptase converts the viral RNA genome into double-stranded viral DNA. The RNase H domain of the reverse transcriptase performs two functions. It degrades the RNA template and specifically removes the RNA primer from the RNA/DNA hybrid. Following nuclear import, the integrase catalyzes the insertion of the linear, double-stranded viral DNA into the host cell chromosome. Endogenous Pol proteins may have kept, lost or modified their original function during evolution (By similarity).</text>
</comment>
<comment type="catalytic activity">
    <reaction evidence="2">
        <text>DNA(n) + a 2'-deoxyribonucleoside 5'-triphosphate = DNA(n+1) + diphosphate</text>
        <dbReference type="Rhea" id="RHEA:22508"/>
        <dbReference type="Rhea" id="RHEA-COMP:17339"/>
        <dbReference type="Rhea" id="RHEA-COMP:17340"/>
        <dbReference type="ChEBI" id="CHEBI:33019"/>
        <dbReference type="ChEBI" id="CHEBI:61560"/>
        <dbReference type="ChEBI" id="CHEBI:173112"/>
        <dbReference type="EC" id="2.7.7.49"/>
    </reaction>
</comment>
<comment type="catalytic activity">
    <reaction evidence="3">
        <text>Endonucleolytic cleavage to 5'-phosphomonoester.</text>
        <dbReference type="EC" id="3.1.26.4"/>
    </reaction>
</comment>
<comment type="domain">
    <text>The LPQG and YXDD motifs are catalytically important and conserved among many retroviruses.</text>
</comment>
<comment type="miscellaneous">
    <text>This protein is synthesized as Gag-Pro and Gag-Pro-Pol polyprotein precursors. These polyproteins are thought, by similarity with type-B retroviruses, to be generated by -1 frameshifts occurring at the Gag-Pro and Pro-Pol genes boundaries.</text>
</comment>
<comment type="miscellaneous">
    <text>Exact N-terminus of this protein has not been formally described.</text>
</comment>
<comment type="similarity">
    <text evidence="8">Belongs to the beta type-B retroviral polymerase family. HERV class-II K(HML-2) pol subfamily.</text>
</comment>
<gene>
    <name type="primary">ERVK-25</name>
</gene>
<name>POK25_HUMAN</name>
<reference key="1">
    <citation type="submission" date="1999-11" db="EMBL/GenBank/DDBJ databases">
        <authorList>
            <person name="Hattori M."/>
            <person name="Ishii K."/>
            <person name="Toyoda A."/>
            <person name="Taylor T.D."/>
            <person name="Hong-Seog P."/>
            <person name="Fujiyama A."/>
            <person name="Yada T."/>
            <person name="Totoki Y."/>
            <person name="Watanabe H."/>
            <person name="Sakaki Y."/>
        </authorList>
    </citation>
    <scope>NUCLEOTIDE SEQUENCE [GENOMIC DNA]</scope>
</reference>